<dbReference type="EC" id="2.7.7.6" evidence="1"/>
<dbReference type="EMBL" id="CP001011">
    <property type="protein sequence ID" value="ACB91904.1"/>
    <property type="molecule type" value="Genomic_DNA"/>
</dbReference>
<dbReference type="RefSeq" id="WP_004090142.1">
    <property type="nucleotide sequence ID" value="NC_010577.1"/>
</dbReference>
<dbReference type="SMR" id="B2I8J3"/>
<dbReference type="GeneID" id="93904163"/>
<dbReference type="KEGG" id="xfn:XfasM23_0457"/>
<dbReference type="HOGENOM" id="CLU_053084_0_0_6"/>
<dbReference type="Proteomes" id="UP000001698">
    <property type="component" value="Chromosome"/>
</dbReference>
<dbReference type="GO" id="GO:0005737">
    <property type="term" value="C:cytoplasm"/>
    <property type="evidence" value="ECO:0007669"/>
    <property type="project" value="UniProtKB-ARBA"/>
</dbReference>
<dbReference type="GO" id="GO:0000428">
    <property type="term" value="C:DNA-directed RNA polymerase complex"/>
    <property type="evidence" value="ECO:0007669"/>
    <property type="project" value="UniProtKB-KW"/>
</dbReference>
<dbReference type="GO" id="GO:0003677">
    <property type="term" value="F:DNA binding"/>
    <property type="evidence" value="ECO:0007669"/>
    <property type="project" value="UniProtKB-UniRule"/>
</dbReference>
<dbReference type="GO" id="GO:0003899">
    <property type="term" value="F:DNA-directed RNA polymerase activity"/>
    <property type="evidence" value="ECO:0007669"/>
    <property type="project" value="UniProtKB-UniRule"/>
</dbReference>
<dbReference type="GO" id="GO:0046983">
    <property type="term" value="F:protein dimerization activity"/>
    <property type="evidence" value="ECO:0007669"/>
    <property type="project" value="InterPro"/>
</dbReference>
<dbReference type="GO" id="GO:0006351">
    <property type="term" value="P:DNA-templated transcription"/>
    <property type="evidence" value="ECO:0007669"/>
    <property type="project" value="UniProtKB-UniRule"/>
</dbReference>
<dbReference type="CDD" id="cd06928">
    <property type="entry name" value="RNAP_alpha_NTD"/>
    <property type="match status" value="1"/>
</dbReference>
<dbReference type="FunFam" id="1.10.150.20:FF:000001">
    <property type="entry name" value="DNA-directed RNA polymerase subunit alpha"/>
    <property type="match status" value="1"/>
</dbReference>
<dbReference type="FunFam" id="2.170.120.12:FF:000001">
    <property type="entry name" value="DNA-directed RNA polymerase subunit alpha"/>
    <property type="match status" value="1"/>
</dbReference>
<dbReference type="Gene3D" id="1.10.150.20">
    <property type="entry name" value="5' to 3' exonuclease, C-terminal subdomain"/>
    <property type="match status" value="1"/>
</dbReference>
<dbReference type="Gene3D" id="2.170.120.12">
    <property type="entry name" value="DNA-directed RNA polymerase, insert domain"/>
    <property type="match status" value="1"/>
</dbReference>
<dbReference type="Gene3D" id="3.30.1360.10">
    <property type="entry name" value="RNA polymerase, RBP11-like subunit"/>
    <property type="match status" value="1"/>
</dbReference>
<dbReference type="HAMAP" id="MF_00059">
    <property type="entry name" value="RNApol_bact_RpoA"/>
    <property type="match status" value="1"/>
</dbReference>
<dbReference type="InterPro" id="IPR011262">
    <property type="entry name" value="DNA-dir_RNA_pol_insert"/>
</dbReference>
<dbReference type="InterPro" id="IPR011263">
    <property type="entry name" value="DNA-dir_RNA_pol_RpoA/D/Rpb3"/>
</dbReference>
<dbReference type="InterPro" id="IPR011773">
    <property type="entry name" value="DNA-dir_RpoA"/>
</dbReference>
<dbReference type="InterPro" id="IPR036603">
    <property type="entry name" value="RBP11-like"/>
</dbReference>
<dbReference type="InterPro" id="IPR011260">
    <property type="entry name" value="RNAP_asu_C"/>
</dbReference>
<dbReference type="InterPro" id="IPR036643">
    <property type="entry name" value="RNApol_insert_sf"/>
</dbReference>
<dbReference type="NCBIfam" id="NF003513">
    <property type="entry name" value="PRK05182.1-2"/>
    <property type="match status" value="1"/>
</dbReference>
<dbReference type="NCBIfam" id="NF003519">
    <property type="entry name" value="PRK05182.2-5"/>
    <property type="match status" value="1"/>
</dbReference>
<dbReference type="NCBIfam" id="TIGR02027">
    <property type="entry name" value="rpoA"/>
    <property type="match status" value="1"/>
</dbReference>
<dbReference type="Pfam" id="PF01000">
    <property type="entry name" value="RNA_pol_A_bac"/>
    <property type="match status" value="1"/>
</dbReference>
<dbReference type="Pfam" id="PF03118">
    <property type="entry name" value="RNA_pol_A_CTD"/>
    <property type="match status" value="1"/>
</dbReference>
<dbReference type="Pfam" id="PF01193">
    <property type="entry name" value="RNA_pol_L"/>
    <property type="match status" value="1"/>
</dbReference>
<dbReference type="SMART" id="SM00662">
    <property type="entry name" value="RPOLD"/>
    <property type="match status" value="1"/>
</dbReference>
<dbReference type="SUPFAM" id="SSF47789">
    <property type="entry name" value="C-terminal domain of RNA polymerase alpha subunit"/>
    <property type="match status" value="1"/>
</dbReference>
<dbReference type="SUPFAM" id="SSF56553">
    <property type="entry name" value="Insert subdomain of RNA polymerase alpha subunit"/>
    <property type="match status" value="1"/>
</dbReference>
<dbReference type="SUPFAM" id="SSF55257">
    <property type="entry name" value="RBP11-like subunits of RNA polymerase"/>
    <property type="match status" value="1"/>
</dbReference>
<keyword id="KW-0240">DNA-directed RNA polymerase</keyword>
<keyword id="KW-0548">Nucleotidyltransferase</keyword>
<keyword id="KW-0804">Transcription</keyword>
<keyword id="KW-0808">Transferase</keyword>
<sequence length="332" mass="36554">MTVTVSQVLRPRGPQIERLTENRAKVVLEPLGRGYAHTLGNALRRVLLSSIPGFAITEVEIDGVLHEYTTVEGLQEDVLEVLLNLKDVAIRIHSGDTATLSLFKQGAGVVTAADIKTDHNVEIINDGHVICHLTKDTTINMRLKIERGFGYQPAVVRRRPDDENRTIGRLILDASFSPVRRVAYVVEAARVEQRTDLDKLIIDIETNGTIDAEEALRTAADILTDQLSVFGDFTHRDRGTVKPASSGVDPVLLRPIDDLELTVRSANCLKAESIYYIGDLIQKTEVELLKTPNLGKKSLTEIKEVLGQRGLGLGVKLENWPPPGVSQYGMLG</sequence>
<organism>
    <name type="scientific">Xylella fastidiosa (strain M23)</name>
    <dbReference type="NCBI Taxonomy" id="405441"/>
    <lineage>
        <taxon>Bacteria</taxon>
        <taxon>Pseudomonadati</taxon>
        <taxon>Pseudomonadota</taxon>
        <taxon>Gammaproteobacteria</taxon>
        <taxon>Lysobacterales</taxon>
        <taxon>Lysobacteraceae</taxon>
        <taxon>Xylella</taxon>
    </lineage>
</organism>
<protein>
    <recommendedName>
        <fullName evidence="1">DNA-directed RNA polymerase subunit alpha</fullName>
        <shortName evidence="1">RNAP subunit alpha</shortName>
        <ecNumber evidence="1">2.7.7.6</ecNumber>
    </recommendedName>
    <alternativeName>
        <fullName evidence="1">RNA polymerase subunit alpha</fullName>
    </alternativeName>
    <alternativeName>
        <fullName evidence="1">Transcriptase subunit alpha</fullName>
    </alternativeName>
</protein>
<proteinExistence type="inferred from homology"/>
<accession>B2I8J3</accession>
<feature type="chain" id="PRO_1000091976" description="DNA-directed RNA polymerase subunit alpha">
    <location>
        <begin position="1"/>
        <end position="332"/>
    </location>
</feature>
<feature type="region of interest" description="Alpha N-terminal domain (alpha-NTD)" evidence="1">
    <location>
        <begin position="1"/>
        <end position="234"/>
    </location>
</feature>
<feature type="region of interest" description="Alpha C-terminal domain (alpha-CTD)" evidence="1">
    <location>
        <begin position="248"/>
        <end position="332"/>
    </location>
</feature>
<reference key="1">
    <citation type="journal article" date="2010" name="J. Bacteriol.">
        <title>Whole genome sequences of two Xylella fastidiosa strains (M12 and M23) causing almond leaf scorch disease in California.</title>
        <authorList>
            <person name="Chen J."/>
            <person name="Xie G."/>
            <person name="Han S."/>
            <person name="Chertkov O."/>
            <person name="Sims D."/>
            <person name="Civerolo E.L."/>
        </authorList>
    </citation>
    <scope>NUCLEOTIDE SEQUENCE [LARGE SCALE GENOMIC DNA]</scope>
    <source>
        <strain>M23</strain>
    </source>
</reference>
<evidence type="ECO:0000255" key="1">
    <source>
        <dbReference type="HAMAP-Rule" id="MF_00059"/>
    </source>
</evidence>
<name>RPOA_XYLF2</name>
<gene>
    <name evidence="1" type="primary">rpoA</name>
    <name type="ordered locus">XfasM23_0457</name>
</gene>
<comment type="function">
    <text evidence="1">DNA-dependent RNA polymerase catalyzes the transcription of DNA into RNA using the four ribonucleoside triphosphates as substrates.</text>
</comment>
<comment type="catalytic activity">
    <reaction evidence="1">
        <text>RNA(n) + a ribonucleoside 5'-triphosphate = RNA(n+1) + diphosphate</text>
        <dbReference type="Rhea" id="RHEA:21248"/>
        <dbReference type="Rhea" id="RHEA-COMP:14527"/>
        <dbReference type="Rhea" id="RHEA-COMP:17342"/>
        <dbReference type="ChEBI" id="CHEBI:33019"/>
        <dbReference type="ChEBI" id="CHEBI:61557"/>
        <dbReference type="ChEBI" id="CHEBI:140395"/>
        <dbReference type="EC" id="2.7.7.6"/>
    </reaction>
</comment>
<comment type="subunit">
    <text evidence="1">Homodimer. The RNAP catalytic core consists of 2 alpha, 1 beta, 1 beta' and 1 omega subunit. When a sigma factor is associated with the core the holoenzyme is formed, which can initiate transcription.</text>
</comment>
<comment type="domain">
    <text evidence="1">The N-terminal domain is essential for RNAP assembly and basal transcription, whereas the C-terminal domain is involved in interaction with transcriptional regulators and with upstream promoter elements.</text>
</comment>
<comment type="similarity">
    <text evidence="1">Belongs to the RNA polymerase alpha chain family.</text>
</comment>